<feature type="chain" id="PRO_0000310384" description="Uncharacterized transcriptional regulatory protein C16G5.17">
    <location>
        <begin position="1"/>
        <end position="560"/>
    </location>
</feature>
<feature type="transmembrane region" description="Helical" evidence="1">
    <location>
        <begin position="182"/>
        <end position="202"/>
    </location>
</feature>
<feature type="DNA-binding region" description="Zn(2)-C6 fungal-type" evidence="2">
    <location>
        <begin position="18"/>
        <end position="44"/>
    </location>
</feature>
<feature type="region of interest" description="Disordered" evidence="3">
    <location>
        <begin position="60"/>
        <end position="80"/>
    </location>
</feature>
<feature type="compositionally biased region" description="Basic and acidic residues" evidence="3">
    <location>
        <begin position="64"/>
        <end position="80"/>
    </location>
</feature>
<reference key="1">
    <citation type="journal article" date="2002" name="Nature">
        <title>The genome sequence of Schizosaccharomyces pombe.</title>
        <authorList>
            <person name="Wood V."/>
            <person name="Gwilliam R."/>
            <person name="Rajandream M.A."/>
            <person name="Lyne M.H."/>
            <person name="Lyne R."/>
            <person name="Stewart A."/>
            <person name="Sgouros J.G."/>
            <person name="Peat N."/>
            <person name="Hayles J."/>
            <person name="Baker S.G."/>
            <person name="Basham D."/>
            <person name="Bowman S."/>
            <person name="Brooks K."/>
            <person name="Brown D."/>
            <person name="Brown S."/>
            <person name="Chillingworth T."/>
            <person name="Churcher C.M."/>
            <person name="Collins M."/>
            <person name="Connor R."/>
            <person name="Cronin A."/>
            <person name="Davis P."/>
            <person name="Feltwell T."/>
            <person name="Fraser A."/>
            <person name="Gentles S."/>
            <person name="Goble A."/>
            <person name="Hamlin N."/>
            <person name="Harris D.E."/>
            <person name="Hidalgo J."/>
            <person name="Hodgson G."/>
            <person name="Holroyd S."/>
            <person name="Hornsby T."/>
            <person name="Howarth S."/>
            <person name="Huckle E.J."/>
            <person name="Hunt S."/>
            <person name="Jagels K."/>
            <person name="James K.D."/>
            <person name="Jones L."/>
            <person name="Jones M."/>
            <person name="Leather S."/>
            <person name="McDonald S."/>
            <person name="McLean J."/>
            <person name="Mooney P."/>
            <person name="Moule S."/>
            <person name="Mungall K.L."/>
            <person name="Murphy L.D."/>
            <person name="Niblett D."/>
            <person name="Odell C."/>
            <person name="Oliver K."/>
            <person name="O'Neil S."/>
            <person name="Pearson D."/>
            <person name="Quail M.A."/>
            <person name="Rabbinowitsch E."/>
            <person name="Rutherford K.M."/>
            <person name="Rutter S."/>
            <person name="Saunders D."/>
            <person name="Seeger K."/>
            <person name="Sharp S."/>
            <person name="Skelton J."/>
            <person name="Simmonds M.N."/>
            <person name="Squares R."/>
            <person name="Squares S."/>
            <person name="Stevens K."/>
            <person name="Taylor K."/>
            <person name="Taylor R.G."/>
            <person name="Tivey A."/>
            <person name="Walsh S.V."/>
            <person name="Warren T."/>
            <person name="Whitehead S."/>
            <person name="Woodward J.R."/>
            <person name="Volckaert G."/>
            <person name="Aert R."/>
            <person name="Robben J."/>
            <person name="Grymonprez B."/>
            <person name="Weltjens I."/>
            <person name="Vanstreels E."/>
            <person name="Rieger M."/>
            <person name="Schaefer M."/>
            <person name="Mueller-Auer S."/>
            <person name="Gabel C."/>
            <person name="Fuchs M."/>
            <person name="Duesterhoeft A."/>
            <person name="Fritzc C."/>
            <person name="Holzer E."/>
            <person name="Moestl D."/>
            <person name="Hilbert H."/>
            <person name="Borzym K."/>
            <person name="Langer I."/>
            <person name="Beck A."/>
            <person name="Lehrach H."/>
            <person name="Reinhardt R."/>
            <person name="Pohl T.M."/>
            <person name="Eger P."/>
            <person name="Zimmermann W."/>
            <person name="Wedler H."/>
            <person name="Wambutt R."/>
            <person name="Purnelle B."/>
            <person name="Goffeau A."/>
            <person name="Cadieu E."/>
            <person name="Dreano S."/>
            <person name="Gloux S."/>
            <person name="Lelaure V."/>
            <person name="Mottier S."/>
            <person name="Galibert F."/>
            <person name="Aves S.J."/>
            <person name="Xiang Z."/>
            <person name="Hunt C."/>
            <person name="Moore K."/>
            <person name="Hurst S.M."/>
            <person name="Lucas M."/>
            <person name="Rochet M."/>
            <person name="Gaillardin C."/>
            <person name="Tallada V.A."/>
            <person name="Garzon A."/>
            <person name="Thode G."/>
            <person name="Daga R.R."/>
            <person name="Cruzado L."/>
            <person name="Jimenez J."/>
            <person name="Sanchez M."/>
            <person name="del Rey F."/>
            <person name="Benito J."/>
            <person name="Dominguez A."/>
            <person name="Revuelta J.L."/>
            <person name="Moreno S."/>
            <person name="Armstrong J."/>
            <person name="Forsburg S.L."/>
            <person name="Cerutti L."/>
            <person name="Lowe T."/>
            <person name="McCombie W.R."/>
            <person name="Paulsen I."/>
            <person name="Potashkin J."/>
            <person name="Shpakovski G.V."/>
            <person name="Ussery D."/>
            <person name="Barrell B.G."/>
            <person name="Nurse P."/>
        </authorList>
    </citation>
    <scope>NUCLEOTIDE SEQUENCE [LARGE SCALE GENOMIC DNA]</scope>
    <source>
        <strain>972 / ATCC 24843</strain>
    </source>
</reference>
<reference key="2">
    <citation type="journal article" date="2006" name="Nat. Biotechnol.">
        <title>ORFeome cloning and global analysis of protein localization in the fission yeast Schizosaccharomyces pombe.</title>
        <authorList>
            <person name="Matsuyama A."/>
            <person name="Arai R."/>
            <person name="Yashiroda Y."/>
            <person name="Shirai A."/>
            <person name="Kamata A."/>
            <person name="Sekido S."/>
            <person name="Kobayashi Y."/>
            <person name="Hashimoto A."/>
            <person name="Hamamoto M."/>
            <person name="Hiraoka Y."/>
            <person name="Horinouchi S."/>
            <person name="Yoshida M."/>
        </authorList>
    </citation>
    <scope>SUBCELLULAR LOCATION [LARGE SCALE ANALYSIS]</scope>
</reference>
<name>YH7H_SCHPO</name>
<evidence type="ECO:0000255" key="1"/>
<evidence type="ECO:0000255" key="2">
    <source>
        <dbReference type="PROSITE-ProRule" id="PRU00227"/>
    </source>
</evidence>
<evidence type="ECO:0000256" key="3">
    <source>
        <dbReference type="SAM" id="MobiDB-lite"/>
    </source>
</evidence>
<evidence type="ECO:0000269" key="4">
    <source>
    </source>
</evidence>
<gene>
    <name type="ORF">SPBC16G5.17</name>
</gene>
<accession>O60131</accession>
<comment type="subcellular location">
    <subcellularLocation>
        <location evidence="2 4">Nucleus membrane</location>
        <topology evidence="4">Single-pass membrane protein</topology>
    </subcellularLocation>
</comment>
<sequence>MVGKSKNRAHKNIRARSCLRCRRRKVKCDRQYPCSRCKESEESCTYGVNEQAVQLLEEPLSRPITRETDSSAHQETRTRLEENNLPKTQKFGFVDWKTILKSSAEFQGIVQRDPESRLREALETDPKLKKRLECILETIPPWDVCESLLKVYANTFNVTNYILDFEQADKLLSDLKNSNHVFATSIILIVTAIAVALSLESFPSNIERYFSAVNHSAIELSDALNSKIDDFLNEEVIFRLWRNIDRIRLHAIRAQLCMRNQFRSMNTDLCYAIHYACFVNPIFQNTDTEYEANMEVWLSICEIDALECVLRSCQPWVQHDIYGKLLSQRKMGSDVISYEFHSLLGQLLTCGLEIYKAIHTSTVNEFVNSIQFYESQLSLVLMEIESKFSNIDGSDIHFRYLFLKTVFWTVRKNLYQGFITVSRTLVPNYPDIVQKLGQTSIQLSRLISNSMDCFEKYGWLKAMLILVTHTFLIIHVCSERGYDVPKDFWNVTASVQATLEEKKYPGIVWERIHYVLNIYTTINSVEPELSEDHGDLDDQNLFQVFTDIFDFNFNFPLPNL</sequence>
<protein>
    <recommendedName>
        <fullName>Uncharacterized transcriptional regulatory protein C16G5.17</fullName>
    </recommendedName>
</protein>
<dbReference type="EMBL" id="CU329671">
    <property type="protein sequence ID" value="CAA19036.1"/>
    <property type="molecule type" value="Genomic_DNA"/>
</dbReference>
<dbReference type="PIR" id="T39609">
    <property type="entry name" value="T39609"/>
</dbReference>
<dbReference type="RefSeq" id="NP_596766.1">
    <property type="nucleotide sequence ID" value="NM_001023786.2"/>
</dbReference>
<dbReference type="SMR" id="O60131"/>
<dbReference type="BioGRID" id="276452">
    <property type="interactions" value="16"/>
</dbReference>
<dbReference type="FunCoup" id="O60131">
    <property type="interactions" value="2"/>
</dbReference>
<dbReference type="PaxDb" id="4896-SPBC16G5.17.1"/>
<dbReference type="EnsemblFungi" id="SPBC16G5.17.1">
    <property type="protein sequence ID" value="SPBC16G5.17.1:pep"/>
    <property type="gene ID" value="SPBC16G5.17"/>
</dbReference>
<dbReference type="KEGG" id="spo:2539906"/>
<dbReference type="PomBase" id="SPBC16G5.17"/>
<dbReference type="VEuPathDB" id="FungiDB:SPBC16G5.17"/>
<dbReference type="HOGENOM" id="CLU_037354_0_0_1"/>
<dbReference type="InParanoid" id="O60131"/>
<dbReference type="OMA" id="YEFHCIL"/>
<dbReference type="PRO" id="PR:O60131"/>
<dbReference type="Proteomes" id="UP000002485">
    <property type="component" value="Chromosome II"/>
</dbReference>
<dbReference type="GO" id="GO:0031965">
    <property type="term" value="C:nuclear membrane"/>
    <property type="evidence" value="ECO:0007669"/>
    <property type="project" value="UniProtKB-SubCell"/>
</dbReference>
<dbReference type="GO" id="GO:0005634">
    <property type="term" value="C:nucleus"/>
    <property type="evidence" value="ECO:0007005"/>
    <property type="project" value="PomBase"/>
</dbReference>
<dbReference type="GO" id="GO:0000981">
    <property type="term" value="F:DNA-binding transcription factor activity, RNA polymerase II-specific"/>
    <property type="evidence" value="ECO:0000255"/>
    <property type="project" value="PomBase"/>
</dbReference>
<dbReference type="GO" id="GO:0000978">
    <property type="term" value="F:RNA polymerase II cis-regulatory region sequence-specific DNA binding"/>
    <property type="evidence" value="ECO:0000255"/>
    <property type="project" value="PomBase"/>
</dbReference>
<dbReference type="GO" id="GO:0008270">
    <property type="term" value="F:zinc ion binding"/>
    <property type="evidence" value="ECO:0000255"/>
    <property type="project" value="PomBase"/>
</dbReference>
<dbReference type="GO" id="GO:0006357">
    <property type="term" value="P:regulation of transcription by RNA polymerase II"/>
    <property type="evidence" value="ECO:0000255"/>
    <property type="project" value="PomBase"/>
</dbReference>
<dbReference type="CDD" id="cd00067">
    <property type="entry name" value="GAL4"/>
    <property type="match status" value="1"/>
</dbReference>
<dbReference type="Gene3D" id="4.10.240.10">
    <property type="entry name" value="Zn(2)-C6 fungal-type DNA-binding domain"/>
    <property type="match status" value="1"/>
</dbReference>
<dbReference type="InterPro" id="IPR050613">
    <property type="entry name" value="Sec_Metabolite_Reg"/>
</dbReference>
<dbReference type="InterPro" id="IPR036864">
    <property type="entry name" value="Zn2-C6_fun-type_DNA-bd_sf"/>
</dbReference>
<dbReference type="InterPro" id="IPR001138">
    <property type="entry name" value="Zn2Cys6_DnaBD"/>
</dbReference>
<dbReference type="PANTHER" id="PTHR31001:SF88">
    <property type="entry name" value="TRANSCRIPTION FACTOR PDR3"/>
    <property type="match status" value="1"/>
</dbReference>
<dbReference type="PANTHER" id="PTHR31001">
    <property type="entry name" value="UNCHARACTERIZED TRANSCRIPTIONAL REGULATORY PROTEIN"/>
    <property type="match status" value="1"/>
</dbReference>
<dbReference type="Pfam" id="PF00172">
    <property type="entry name" value="Zn_clus"/>
    <property type="match status" value="1"/>
</dbReference>
<dbReference type="SMART" id="SM00066">
    <property type="entry name" value="GAL4"/>
    <property type="match status" value="1"/>
</dbReference>
<dbReference type="SUPFAM" id="SSF57701">
    <property type="entry name" value="Zn2/Cys6 DNA-binding domain"/>
    <property type="match status" value="1"/>
</dbReference>
<dbReference type="PROSITE" id="PS00463">
    <property type="entry name" value="ZN2_CY6_FUNGAL_1"/>
    <property type="match status" value="1"/>
</dbReference>
<dbReference type="PROSITE" id="PS50048">
    <property type="entry name" value="ZN2_CY6_FUNGAL_2"/>
    <property type="match status" value="1"/>
</dbReference>
<keyword id="KW-0238">DNA-binding</keyword>
<keyword id="KW-0472">Membrane</keyword>
<keyword id="KW-0479">Metal-binding</keyword>
<keyword id="KW-0539">Nucleus</keyword>
<keyword id="KW-1185">Reference proteome</keyword>
<keyword id="KW-0804">Transcription</keyword>
<keyword id="KW-0805">Transcription regulation</keyword>
<keyword id="KW-0812">Transmembrane</keyword>
<keyword id="KW-1133">Transmembrane helix</keyword>
<keyword id="KW-0862">Zinc</keyword>
<organism>
    <name type="scientific">Schizosaccharomyces pombe (strain 972 / ATCC 24843)</name>
    <name type="common">Fission yeast</name>
    <dbReference type="NCBI Taxonomy" id="284812"/>
    <lineage>
        <taxon>Eukaryota</taxon>
        <taxon>Fungi</taxon>
        <taxon>Dikarya</taxon>
        <taxon>Ascomycota</taxon>
        <taxon>Taphrinomycotina</taxon>
        <taxon>Schizosaccharomycetes</taxon>
        <taxon>Schizosaccharomycetales</taxon>
        <taxon>Schizosaccharomycetaceae</taxon>
        <taxon>Schizosaccharomyces</taxon>
    </lineage>
</organism>
<proteinExistence type="inferred from homology"/>